<dbReference type="EMBL" id="AF020810">
    <property type="protein sequence ID" value="AAG31204.1"/>
    <property type="molecule type" value="Genomic_DNA"/>
</dbReference>
<dbReference type="EMBL" id="FQ312003">
    <property type="protein sequence ID" value="CBW18867.1"/>
    <property type="molecule type" value="Genomic_DNA"/>
</dbReference>
<dbReference type="RefSeq" id="WP_001237934.1">
    <property type="nucleotide sequence ID" value="NZ_QASL01000009.1"/>
</dbReference>
<dbReference type="SMR" id="E1WA34"/>
<dbReference type="KEGG" id="sey:SL1344_2769"/>
<dbReference type="PATRIC" id="fig|216597.6.peg.3080"/>
<dbReference type="HOGENOM" id="CLU_000445_30_1_6"/>
<dbReference type="BioCyc" id="SENT216597:SL1344_RS14415-MONOMER"/>
<dbReference type="Proteomes" id="UP000008962">
    <property type="component" value="Chromosome"/>
</dbReference>
<dbReference type="GO" id="GO:0005829">
    <property type="term" value="C:cytosol"/>
    <property type="evidence" value="ECO:0007669"/>
    <property type="project" value="TreeGrafter"/>
</dbReference>
<dbReference type="GO" id="GO:0032993">
    <property type="term" value="C:protein-DNA complex"/>
    <property type="evidence" value="ECO:0007669"/>
    <property type="project" value="TreeGrafter"/>
</dbReference>
<dbReference type="GO" id="GO:0000156">
    <property type="term" value="F:phosphorelay response regulator activity"/>
    <property type="evidence" value="ECO:0007669"/>
    <property type="project" value="TreeGrafter"/>
</dbReference>
<dbReference type="GO" id="GO:0000976">
    <property type="term" value="F:transcription cis-regulatory region binding"/>
    <property type="evidence" value="ECO:0007669"/>
    <property type="project" value="TreeGrafter"/>
</dbReference>
<dbReference type="GO" id="GO:0006355">
    <property type="term" value="P:regulation of DNA-templated transcription"/>
    <property type="evidence" value="ECO:0007669"/>
    <property type="project" value="InterPro"/>
</dbReference>
<dbReference type="CDD" id="cd17624">
    <property type="entry name" value="REC_OmpR_PmrA-like"/>
    <property type="match status" value="1"/>
</dbReference>
<dbReference type="CDD" id="cd00383">
    <property type="entry name" value="trans_reg_C"/>
    <property type="match status" value="1"/>
</dbReference>
<dbReference type="FunFam" id="1.10.10.10:FF:000294">
    <property type="entry name" value="DNA-binding response regulator"/>
    <property type="match status" value="1"/>
</dbReference>
<dbReference type="FunFam" id="3.40.50.2300:FF:000002">
    <property type="entry name" value="DNA-binding response regulator PhoP"/>
    <property type="match status" value="1"/>
</dbReference>
<dbReference type="Gene3D" id="3.40.50.2300">
    <property type="match status" value="1"/>
</dbReference>
<dbReference type="Gene3D" id="6.10.250.690">
    <property type="match status" value="1"/>
</dbReference>
<dbReference type="Gene3D" id="1.10.10.10">
    <property type="entry name" value="Winged helix-like DNA-binding domain superfamily/Winged helix DNA-binding domain"/>
    <property type="match status" value="1"/>
</dbReference>
<dbReference type="InterPro" id="IPR011006">
    <property type="entry name" value="CheY-like_superfamily"/>
</dbReference>
<dbReference type="InterPro" id="IPR001867">
    <property type="entry name" value="OmpR/PhoB-type_DNA-bd"/>
</dbReference>
<dbReference type="InterPro" id="IPR016032">
    <property type="entry name" value="Sig_transdc_resp-reg_C-effctor"/>
</dbReference>
<dbReference type="InterPro" id="IPR001789">
    <property type="entry name" value="Sig_transdc_resp-reg_receiver"/>
</dbReference>
<dbReference type="InterPro" id="IPR039420">
    <property type="entry name" value="WalR-like"/>
</dbReference>
<dbReference type="InterPro" id="IPR036388">
    <property type="entry name" value="WH-like_DNA-bd_sf"/>
</dbReference>
<dbReference type="NCBIfam" id="NF012023">
    <property type="entry name" value="PRK15479.1"/>
    <property type="match status" value="1"/>
</dbReference>
<dbReference type="PANTHER" id="PTHR48111">
    <property type="entry name" value="REGULATOR OF RPOS"/>
    <property type="match status" value="1"/>
</dbReference>
<dbReference type="PANTHER" id="PTHR48111:SF67">
    <property type="entry name" value="TRANSCRIPTIONAL REGULATORY PROTEIN TCTD"/>
    <property type="match status" value="1"/>
</dbReference>
<dbReference type="Pfam" id="PF00072">
    <property type="entry name" value="Response_reg"/>
    <property type="match status" value="1"/>
</dbReference>
<dbReference type="Pfam" id="PF00486">
    <property type="entry name" value="Trans_reg_C"/>
    <property type="match status" value="1"/>
</dbReference>
<dbReference type="SMART" id="SM00448">
    <property type="entry name" value="REC"/>
    <property type="match status" value="1"/>
</dbReference>
<dbReference type="SMART" id="SM00862">
    <property type="entry name" value="Trans_reg_C"/>
    <property type="match status" value="1"/>
</dbReference>
<dbReference type="SUPFAM" id="SSF46894">
    <property type="entry name" value="C-terminal effector domain of the bipartite response regulators"/>
    <property type="match status" value="1"/>
</dbReference>
<dbReference type="SUPFAM" id="SSF52172">
    <property type="entry name" value="CheY-like"/>
    <property type="match status" value="1"/>
</dbReference>
<dbReference type="PROSITE" id="PS51755">
    <property type="entry name" value="OMPR_PHOB"/>
    <property type="match status" value="1"/>
</dbReference>
<dbReference type="PROSITE" id="PS50110">
    <property type="entry name" value="RESPONSE_REGULATORY"/>
    <property type="match status" value="1"/>
</dbReference>
<comment type="function">
    <text evidence="1">Transcriptional activator of the tctI tricarboxylate transport system operon.</text>
</comment>
<feature type="chain" id="PRO_0000405428" description="Transcriptional regulatory protein TctD">
    <location>
        <begin position="1"/>
        <end position="224"/>
    </location>
</feature>
<feature type="domain" description="Response regulatory" evidence="2">
    <location>
        <begin position="2"/>
        <end position="116"/>
    </location>
</feature>
<feature type="DNA-binding region" description="OmpR/PhoB-type" evidence="3">
    <location>
        <begin position="121"/>
        <end position="219"/>
    </location>
</feature>
<feature type="modified residue" description="4-aspartylphosphate" evidence="2">
    <location>
        <position position="51"/>
    </location>
</feature>
<sequence>MRLLLAEDNRELAHWLEKALVQNGFAVDCVFDGLAADHLLHSEMYALAVLDINMPGMDGLEVVQRLRKRGQTLPVLLLTARSAVADRVKGLNVGADDYLPKPFELEELDARLRALLRRSAGQVHEVQQLGELIFHDEGYFLLQGQPLALTPREQALLTVLMYRRTRPVSRQQLFEQVFSLNDEVSPESIELYIHRLRKKLQGSDVRITTLRGLGYVLERGDEVG</sequence>
<proteinExistence type="inferred from homology"/>
<organism>
    <name type="scientific">Salmonella typhimurium (strain SL1344)</name>
    <dbReference type="NCBI Taxonomy" id="216597"/>
    <lineage>
        <taxon>Bacteria</taxon>
        <taxon>Pseudomonadati</taxon>
        <taxon>Pseudomonadota</taxon>
        <taxon>Gammaproteobacteria</taxon>
        <taxon>Enterobacterales</taxon>
        <taxon>Enterobacteriaceae</taxon>
        <taxon>Salmonella</taxon>
    </lineage>
</organism>
<reference key="1">
    <citation type="journal article" date="2000" name="Infect. Immun.">
        <title>mig-14 is a horizontally acquired, host-induced gene required for Salmonella enterica lethal infection in the murine model of typhoid fever.</title>
        <authorList>
            <person name="Valdivia R.H."/>
            <person name="Cirillo D.M."/>
            <person name="Lee A.K."/>
            <person name="Bouley D.M."/>
            <person name="Falkow S."/>
        </authorList>
    </citation>
    <scope>NUCLEOTIDE SEQUENCE [GENOMIC DNA]</scope>
    <source>
        <strain>SL1344</strain>
    </source>
</reference>
<reference key="2">
    <citation type="journal article" date="2012" name="Proc. Natl. Acad. Sci. U.S.A.">
        <title>The transcriptional landscape and small RNAs of Salmonella enterica serovar Typhimurium.</title>
        <authorList>
            <person name="Kroger C."/>
            <person name="Dillon S.C."/>
            <person name="Cameron A.D."/>
            <person name="Papenfort K."/>
            <person name="Sivasankaran S.K."/>
            <person name="Hokamp K."/>
            <person name="Chao Y."/>
            <person name="Sittka A."/>
            <person name="Hebrard M."/>
            <person name="Handler K."/>
            <person name="Colgan A."/>
            <person name="Leekitcharoenphon P."/>
            <person name="Langridge G.C."/>
            <person name="Lohan A.J."/>
            <person name="Loftus B."/>
            <person name="Lucchini S."/>
            <person name="Ussery D.W."/>
            <person name="Dorman C.J."/>
            <person name="Thomson N.R."/>
            <person name="Vogel J."/>
            <person name="Hinton J.C."/>
        </authorList>
    </citation>
    <scope>NUCLEOTIDE SEQUENCE [LARGE SCALE GENOMIC DNA]</scope>
    <source>
        <strain>SL1344</strain>
    </source>
</reference>
<protein>
    <recommendedName>
        <fullName>Transcriptional regulatory protein TctD</fullName>
    </recommendedName>
</protein>
<keyword id="KW-0010">Activator</keyword>
<keyword id="KW-0238">DNA-binding</keyword>
<keyword id="KW-0597">Phosphoprotein</keyword>
<keyword id="KW-0804">Transcription</keyword>
<keyword id="KW-0805">Transcription regulation</keyword>
<keyword id="KW-0902">Two-component regulatory system</keyword>
<gene>
    <name type="primary">tctD</name>
    <name type="ordered locus">SL1344_2769</name>
</gene>
<evidence type="ECO:0000250" key="1"/>
<evidence type="ECO:0000255" key="2">
    <source>
        <dbReference type="PROSITE-ProRule" id="PRU00169"/>
    </source>
</evidence>
<evidence type="ECO:0000255" key="3">
    <source>
        <dbReference type="PROSITE-ProRule" id="PRU01091"/>
    </source>
</evidence>
<name>TCTD_SALTS</name>
<accession>E1WA34</accession>
<accession>P22104</accession>